<protein>
    <recommendedName>
        <fullName evidence="1">Chorismate synthase</fullName>
        <shortName evidence="1">CS</shortName>
        <ecNumber evidence="1">4.2.3.5</ecNumber>
    </recommendedName>
    <alternativeName>
        <fullName evidence="1">5-enolpyruvylshikimate-3-phosphate phospholyase</fullName>
    </alternativeName>
</protein>
<evidence type="ECO:0000255" key="1">
    <source>
        <dbReference type="HAMAP-Rule" id="MF_00300"/>
    </source>
</evidence>
<reference key="1">
    <citation type="journal article" date="2008" name="J. Bacteriol.">
        <title>The pangenome structure of Escherichia coli: comparative genomic analysis of E. coli commensal and pathogenic isolates.</title>
        <authorList>
            <person name="Rasko D.A."/>
            <person name="Rosovitz M.J."/>
            <person name="Myers G.S.A."/>
            <person name="Mongodin E.F."/>
            <person name="Fricke W.F."/>
            <person name="Gajer P."/>
            <person name="Crabtree J."/>
            <person name="Sebaihia M."/>
            <person name="Thomson N.R."/>
            <person name="Chaudhuri R."/>
            <person name="Henderson I.R."/>
            <person name="Sperandio V."/>
            <person name="Ravel J."/>
        </authorList>
    </citation>
    <scope>NUCLEOTIDE SEQUENCE [LARGE SCALE GENOMIC DNA]</scope>
    <source>
        <strain>HS</strain>
    </source>
</reference>
<dbReference type="EC" id="4.2.3.5" evidence="1"/>
<dbReference type="EMBL" id="CP000802">
    <property type="protein sequence ID" value="ABV06753.1"/>
    <property type="molecule type" value="Genomic_DNA"/>
</dbReference>
<dbReference type="RefSeq" id="WP_001333535.1">
    <property type="nucleotide sequence ID" value="NC_009800.1"/>
</dbReference>
<dbReference type="SMR" id="A8A2J9"/>
<dbReference type="GeneID" id="75172457"/>
<dbReference type="KEGG" id="ecx:EcHS_A2481"/>
<dbReference type="HOGENOM" id="CLU_034547_0_2_6"/>
<dbReference type="UniPathway" id="UPA00053">
    <property type="reaction ID" value="UER00090"/>
</dbReference>
<dbReference type="GO" id="GO:0005829">
    <property type="term" value="C:cytosol"/>
    <property type="evidence" value="ECO:0007669"/>
    <property type="project" value="TreeGrafter"/>
</dbReference>
<dbReference type="GO" id="GO:0004107">
    <property type="term" value="F:chorismate synthase activity"/>
    <property type="evidence" value="ECO:0007669"/>
    <property type="project" value="UniProtKB-UniRule"/>
</dbReference>
<dbReference type="GO" id="GO:0010181">
    <property type="term" value="F:FMN binding"/>
    <property type="evidence" value="ECO:0007669"/>
    <property type="project" value="TreeGrafter"/>
</dbReference>
<dbReference type="GO" id="GO:0008652">
    <property type="term" value="P:amino acid biosynthetic process"/>
    <property type="evidence" value="ECO:0007669"/>
    <property type="project" value="UniProtKB-KW"/>
</dbReference>
<dbReference type="GO" id="GO:0009073">
    <property type="term" value="P:aromatic amino acid family biosynthetic process"/>
    <property type="evidence" value="ECO:0007669"/>
    <property type="project" value="UniProtKB-KW"/>
</dbReference>
<dbReference type="GO" id="GO:0009423">
    <property type="term" value="P:chorismate biosynthetic process"/>
    <property type="evidence" value="ECO:0007669"/>
    <property type="project" value="UniProtKB-UniRule"/>
</dbReference>
<dbReference type="CDD" id="cd07304">
    <property type="entry name" value="Chorismate_synthase"/>
    <property type="match status" value="1"/>
</dbReference>
<dbReference type="FunFam" id="3.60.150.10:FF:000001">
    <property type="entry name" value="Chorismate synthase"/>
    <property type="match status" value="1"/>
</dbReference>
<dbReference type="Gene3D" id="3.60.150.10">
    <property type="entry name" value="Chorismate synthase AroC"/>
    <property type="match status" value="1"/>
</dbReference>
<dbReference type="HAMAP" id="MF_00300">
    <property type="entry name" value="Chorismate_synth"/>
    <property type="match status" value="1"/>
</dbReference>
<dbReference type="InterPro" id="IPR000453">
    <property type="entry name" value="Chorismate_synth"/>
</dbReference>
<dbReference type="InterPro" id="IPR035904">
    <property type="entry name" value="Chorismate_synth_AroC_sf"/>
</dbReference>
<dbReference type="InterPro" id="IPR020541">
    <property type="entry name" value="Chorismate_synthase_CS"/>
</dbReference>
<dbReference type="NCBIfam" id="TIGR00033">
    <property type="entry name" value="aroC"/>
    <property type="match status" value="1"/>
</dbReference>
<dbReference type="NCBIfam" id="NF003793">
    <property type="entry name" value="PRK05382.1"/>
    <property type="match status" value="1"/>
</dbReference>
<dbReference type="PANTHER" id="PTHR21085">
    <property type="entry name" value="CHORISMATE SYNTHASE"/>
    <property type="match status" value="1"/>
</dbReference>
<dbReference type="PANTHER" id="PTHR21085:SF0">
    <property type="entry name" value="CHORISMATE SYNTHASE"/>
    <property type="match status" value="1"/>
</dbReference>
<dbReference type="Pfam" id="PF01264">
    <property type="entry name" value="Chorismate_synt"/>
    <property type="match status" value="1"/>
</dbReference>
<dbReference type="PIRSF" id="PIRSF001456">
    <property type="entry name" value="Chorismate_synth"/>
    <property type="match status" value="1"/>
</dbReference>
<dbReference type="SUPFAM" id="SSF103263">
    <property type="entry name" value="Chorismate synthase, AroC"/>
    <property type="match status" value="1"/>
</dbReference>
<dbReference type="PROSITE" id="PS00787">
    <property type="entry name" value="CHORISMATE_SYNTHASE_1"/>
    <property type="match status" value="1"/>
</dbReference>
<dbReference type="PROSITE" id="PS00788">
    <property type="entry name" value="CHORISMATE_SYNTHASE_2"/>
    <property type="match status" value="1"/>
</dbReference>
<dbReference type="PROSITE" id="PS00789">
    <property type="entry name" value="CHORISMATE_SYNTHASE_3"/>
    <property type="match status" value="1"/>
</dbReference>
<sequence length="361" mass="39137">MAGNTIGQLFRVTTFGESHGLALGCIVDGVPPGIPLTEADLQHDLDRRRPGTSRYTTQRREPDQVKILSGVFEGVTTGTSIGLLIENTDQRSQDYSAIKDVFRPGHADYTYEQKYGLRDYRGGGRSSARETAMRVAAGAIAKKYLAEKFGIEIRGCLTQMGDIPLDIKDWSQVEQNPFFCPDPDKIDALDELMRALKKEGDSIGAKVTVVASGVPAGLGEPVFDRLDADIAHALMSINAVKGVEIGDGFDVVALRGSQNRDEITKDGFQSNHAGGILGGISSGQQIIAHMALKPTSSITVPGRTINRFGEEVEMITKGRHDPCVGIRAVPIAEAMLAIVLMDHLLRQRAQNADVKTDIPRW</sequence>
<gene>
    <name evidence="1" type="primary">aroC</name>
    <name type="ordered locus">EcHS_A2481</name>
</gene>
<name>AROC_ECOHS</name>
<proteinExistence type="inferred from homology"/>
<feature type="chain" id="PRO_1000059311" description="Chorismate synthase">
    <location>
        <begin position="1"/>
        <end position="361"/>
    </location>
</feature>
<feature type="binding site" evidence="1">
    <location>
        <position position="48"/>
    </location>
    <ligand>
        <name>NADP(+)</name>
        <dbReference type="ChEBI" id="CHEBI:58349"/>
    </ligand>
</feature>
<feature type="binding site" evidence="1">
    <location>
        <position position="54"/>
    </location>
    <ligand>
        <name>NADP(+)</name>
        <dbReference type="ChEBI" id="CHEBI:58349"/>
    </ligand>
</feature>
<feature type="binding site" evidence="1">
    <location>
        <begin position="125"/>
        <end position="127"/>
    </location>
    <ligand>
        <name>FMN</name>
        <dbReference type="ChEBI" id="CHEBI:58210"/>
    </ligand>
</feature>
<feature type="binding site" evidence="1">
    <location>
        <begin position="238"/>
        <end position="239"/>
    </location>
    <ligand>
        <name>FMN</name>
        <dbReference type="ChEBI" id="CHEBI:58210"/>
    </ligand>
</feature>
<feature type="binding site" evidence="1">
    <location>
        <position position="278"/>
    </location>
    <ligand>
        <name>FMN</name>
        <dbReference type="ChEBI" id="CHEBI:58210"/>
    </ligand>
</feature>
<feature type="binding site" evidence="1">
    <location>
        <begin position="293"/>
        <end position="297"/>
    </location>
    <ligand>
        <name>FMN</name>
        <dbReference type="ChEBI" id="CHEBI:58210"/>
    </ligand>
</feature>
<feature type="binding site" evidence="1">
    <location>
        <position position="319"/>
    </location>
    <ligand>
        <name>FMN</name>
        <dbReference type="ChEBI" id="CHEBI:58210"/>
    </ligand>
</feature>
<organism>
    <name type="scientific">Escherichia coli O9:H4 (strain HS)</name>
    <dbReference type="NCBI Taxonomy" id="331112"/>
    <lineage>
        <taxon>Bacteria</taxon>
        <taxon>Pseudomonadati</taxon>
        <taxon>Pseudomonadota</taxon>
        <taxon>Gammaproteobacteria</taxon>
        <taxon>Enterobacterales</taxon>
        <taxon>Enterobacteriaceae</taxon>
        <taxon>Escherichia</taxon>
    </lineage>
</organism>
<comment type="function">
    <text evidence="1">Catalyzes the anti-1,4-elimination of the C-3 phosphate and the C-6 proR hydrogen from 5-enolpyruvylshikimate-3-phosphate (EPSP) to yield chorismate, which is the branch point compound that serves as the starting substrate for the three terminal pathways of aromatic amino acid biosynthesis. This reaction introduces a second double bond into the aromatic ring system.</text>
</comment>
<comment type="catalytic activity">
    <reaction evidence="1">
        <text>5-O-(1-carboxyvinyl)-3-phosphoshikimate = chorismate + phosphate</text>
        <dbReference type="Rhea" id="RHEA:21020"/>
        <dbReference type="ChEBI" id="CHEBI:29748"/>
        <dbReference type="ChEBI" id="CHEBI:43474"/>
        <dbReference type="ChEBI" id="CHEBI:57701"/>
        <dbReference type="EC" id="4.2.3.5"/>
    </reaction>
</comment>
<comment type="cofactor">
    <cofactor evidence="1">
        <name>FMNH2</name>
        <dbReference type="ChEBI" id="CHEBI:57618"/>
    </cofactor>
    <text evidence="1">Reduced FMN (FMNH(2)).</text>
</comment>
<comment type="pathway">
    <text evidence="1">Metabolic intermediate biosynthesis; chorismate biosynthesis; chorismate from D-erythrose 4-phosphate and phosphoenolpyruvate: step 7/7.</text>
</comment>
<comment type="subunit">
    <text evidence="1">Homotetramer.</text>
</comment>
<comment type="similarity">
    <text evidence="1">Belongs to the chorismate synthase family.</text>
</comment>
<accession>A8A2J9</accession>
<keyword id="KW-0028">Amino-acid biosynthesis</keyword>
<keyword id="KW-0057">Aromatic amino acid biosynthesis</keyword>
<keyword id="KW-0274">FAD</keyword>
<keyword id="KW-0285">Flavoprotein</keyword>
<keyword id="KW-0288">FMN</keyword>
<keyword id="KW-0456">Lyase</keyword>
<keyword id="KW-0521">NADP</keyword>